<accession>P69607</accession>
<accession>Q91GB7</accession>
<accession>Q99AS5</accession>
<gene>
    <name evidence="1" type="primary">M</name>
</gene>
<organismHost>
    <name type="scientific">Gallus gallus</name>
    <name type="common">Chicken</name>
    <dbReference type="NCBI Taxonomy" id="9031"/>
</organismHost>
<keyword id="KW-0325">Glycoprotein</keyword>
<keyword id="KW-1040">Host Golgi apparatus</keyword>
<keyword id="KW-1043">Host membrane</keyword>
<keyword id="KW-0472">Membrane</keyword>
<keyword id="KW-0812">Transmembrane</keyword>
<keyword id="KW-1133">Transmembrane helix</keyword>
<keyword id="KW-0261">Viral envelope protein</keyword>
<keyword id="KW-0468">Viral matrix protein</keyword>
<keyword id="KW-0946">Virion</keyword>
<sequence>MSNETNCTLDFEQSVELFKEYNLFITAFLLFLTIILQYGYATRSKFIYILKMIVLWCFWPLNIAVGVISCIYPPNTGGLVAAIILTVFACLSFVGYWIQSIRLFKRCRSWWSFNPESNAVGSILLTNGQQCNFAIESVPMVLSPIIKNGVLYCEGQWLAKCEPDHLPKDIFVCTPDRRNIYRMVQKYTGDQSGNKKRFATFVYAKQSVDTGELESVATGGSSLYT</sequence>
<dbReference type="EMBL" id="AY044184">
    <property type="protein sequence ID" value="AAK91808.1"/>
    <property type="molecule type" value="mRNA"/>
</dbReference>
<dbReference type="EMBL" id="AF286185">
    <property type="protein sequence ID" value="AAK83031.1"/>
    <property type="molecule type" value="mRNA"/>
</dbReference>
<dbReference type="SMR" id="P69607"/>
<dbReference type="GO" id="GO:0044178">
    <property type="term" value="C:host cell Golgi membrane"/>
    <property type="evidence" value="ECO:0007669"/>
    <property type="project" value="UniProtKB-SubCell"/>
</dbReference>
<dbReference type="GO" id="GO:0016020">
    <property type="term" value="C:membrane"/>
    <property type="evidence" value="ECO:0007669"/>
    <property type="project" value="UniProtKB-UniRule"/>
</dbReference>
<dbReference type="GO" id="GO:0019031">
    <property type="term" value="C:viral envelope"/>
    <property type="evidence" value="ECO:0007669"/>
    <property type="project" value="UniProtKB-UniRule"/>
</dbReference>
<dbReference type="GO" id="GO:0055036">
    <property type="term" value="C:virion membrane"/>
    <property type="evidence" value="ECO:0007669"/>
    <property type="project" value="UniProtKB-SubCell"/>
</dbReference>
<dbReference type="GO" id="GO:0039660">
    <property type="term" value="F:structural constituent of virion"/>
    <property type="evidence" value="ECO:0007669"/>
    <property type="project" value="UniProtKB-UniRule"/>
</dbReference>
<dbReference type="CDD" id="cd21566">
    <property type="entry name" value="gammaCoV_M"/>
    <property type="match status" value="1"/>
</dbReference>
<dbReference type="HAMAP" id="MF_04203">
    <property type="entry name" value="GAMMA_CORONA_M"/>
    <property type="match status" value="1"/>
</dbReference>
<dbReference type="InterPro" id="IPR042550">
    <property type="entry name" value="GAMMA_CORONA_M"/>
</dbReference>
<dbReference type="InterPro" id="IPR002574">
    <property type="entry name" value="M_CoV"/>
</dbReference>
<dbReference type="Pfam" id="PF01635">
    <property type="entry name" value="CoV_M"/>
    <property type="match status" value="1"/>
</dbReference>
<dbReference type="PROSITE" id="PS51927">
    <property type="entry name" value="COV_M"/>
    <property type="match status" value="1"/>
</dbReference>
<proteinExistence type="evidence at transcript level"/>
<protein>
    <recommendedName>
        <fullName evidence="1">Membrane protein</fullName>
        <shortName evidence="1">M protein</shortName>
    </recommendedName>
    <alternativeName>
        <fullName evidence="1">E1 glycoprotein</fullName>
    </alternativeName>
    <alternativeName>
        <fullName evidence="1">Matrix glycoprotein</fullName>
    </alternativeName>
    <alternativeName>
        <fullName evidence="1">Membrane glycoprotein</fullName>
    </alternativeName>
</protein>
<comment type="function">
    <text evidence="1 2">Component of the viral envelope that plays a central role in virus morphogenesis and assembly via its interactions with other viral proteins.</text>
</comment>
<comment type="subunit">
    <text evidence="1 2">Homomultimer. Interacts with envelope E protein in the budding compartment of the host cell, which is located between endoplasmic reticulum and the Golgi complex. Forms a complex with HE and S proteins. Interacts with nucleocapsid N protein. This interaction probably participates in RNA packaging into the virus.</text>
</comment>
<comment type="subcellular location">
    <subcellularLocation>
        <location evidence="1">Virion membrane</location>
        <topology evidence="1">Multi-pass membrane protein</topology>
    </subcellularLocation>
    <subcellularLocation>
        <location evidence="1">Host Golgi apparatus membrane</location>
        <topology evidence="1">Multi-pass membrane protein</topology>
    </subcellularLocation>
    <text evidence="1">Largely embedded in the lipid bilayer.</text>
</comment>
<comment type="similarity">
    <text evidence="1">Belongs to the gammacoronaviruses M protein family.</text>
</comment>
<organism>
    <name type="scientific">Avian infectious bronchitis virus (strain H52)</name>
    <name type="common">IBV</name>
    <dbReference type="NCBI Taxonomy" id="231425"/>
    <lineage>
        <taxon>Viruses</taxon>
        <taxon>Riboviria</taxon>
        <taxon>Orthornavirae</taxon>
        <taxon>Pisuviricota</taxon>
        <taxon>Pisoniviricetes</taxon>
        <taxon>Nidovirales</taxon>
        <taxon>Cornidovirineae</taxon>
        <taxon>Coronaviridae</taxon>
        <taxon>Orthocoronavirinae</taxon>
        <taxon>Gammacoronavirus</taxon>
        <taxon>Igacovirus</taxon>
        <taxon>Avian coronavirus</taxon>
    </lineage>
</organism>
<reference key="1">
    <citation type="submission" date="2001-01" db="EMBL/GenBank/DDBJ databases">
        <title>Sequence analysis of matrix gene of several strains of avian infectious bronchitis virus.</title>
        <authorList>
            <person name="Cao W.S."/>
            <person name="Liao M."/>
            <person name="Ren T."/>
            <person name="Xin C.A."/>
        </authorList>
    </citation>
    <scope>NUCLEOTIDE SEQUENCE [MRNA]</scope>
    <source>
        <strain>H52-GD</strain>
    </source>
</reference>
<reference key="2">
    <citation type="submission" date="2000-07" db="EMBL/GenBank/DDBJ databases">
        <title>Comparisons of the membrane protein genes of various strains of avian infectious bronchitis virus.</title>
        <authorList>
            <person name="Brooks J.E."/>
            <person name="Rainer A.C."/>
            <person name="Parr R.L."/>
            <person name="Collisson E.W."/>
        </authorList>
    </citation>
    <scope>NUCLEOTIDE SEQUENCE [MRNA]</scope>
</reference>
<name>VME1_IBVH5</name>
<feature type="chain" id="PRO_0000106058" description="Membrane protein">
    <location>
        <begin position="1"/>
        <end position="225"/>
    </location>
</feature>
<feature type="topological domain" description="Virion surface" evidence="1">
    <location>
        <begin position="1"/>
        <end position="20"/>
    </location>
</feature>
<feature type="transmembrane region" description="Helical" evidence="1">
    <location>
        <begin position="21"/>
        <end position="41"/>
    </location>
</feature>
<feature type="topological domain" description="Intravirion" evidence="1">
    <location>
        <begin position="42"/>
        <end position="51"/>
    </location>
</feature>
<feature type="transmembrane region" description="Helical" evidence="1">
    <location>
        <begin position="52"/>
        <end position="72"/>
    </location>
</feature>
<feature type="topological domain" description="Virion surface" evidence="1">
    <location>
        <begin position="73"/>
        <end position="77"/>
    </location>
</feature>
<feature type="transmembrane region" description="Helical" evidence="1">
    <location>
        <begin position="78"/>
        <end position="98"/>
    </location>
</feature>
<feature type="topological domain" description="Intravirion" evidence="1">
    <location>
        <begin position="99"/>
        <end position="225"/>
    </location>
</feature>
<feature type="sequence conflict" description="In Ref. 2; AAK91808." evidence="3" ref="2">
    <original>A</original>
    <variation>S</variation>
    <location>
        <position position="204"/>
    </location>
</feature>
<evidence type="ECO:0000255" key="1">
    <source>
        <dbReference type="HAMAP-Rule" id="MF_04203"/>
    </source>
</evidence>
<evidence type="ECO:0000255" key="2">
    <source>
        <dbReference type="PROSITE-ProRule" id="PRU01275"/>
    </source>
</evidence>
<evidence type="ECO:0000305" key="3"/>